<sequence>MRLLHTMLRVGDLQRSIAFYTNVLGMKLLRTSENPEYKYSLAFVGYGPETEEAVIELTYNWGVESYDMGNAYGHIALSVDNAAEACERIRQNGGNVTREAGPVKGGSTIIAFVEDPDGYKIELIEAKDAGRGLGN</sequence>
<protein>
    <recommendedName>
        <fullName>Lactoylglutathione lyase</fullName>
        <ecNumber>4.4.1.5</ecNumber>
    </recommendedName>
    <alternativeName>
        <fullName>Aldoketomutase</fullName>
    </alternativeName>
    <alternativeName>
        <fullName>Glyoxalase I</fullName>
        <shortName>Glx I</shortName>
    </alternativeName>
    <alternativeName>
        <fullName>Ketone-aldehyde mutase</fullName>
    </alternativeName>
    <alternativeName>
        <fullName>Methylglyoxalase</fullName>
    </alternativeName>
    <alternativeName>
        <fullName>S-D-lactoylglutathione methylglyoxal lyase</fullName>
    </alternativeName>
</protein>
<evidence type="ECO:0000250" key="1"/>
<evidence type="ECO:0000255" key="2">
    <source>
        <dbReference type="PROSITE-ProRule" id="PRU01163"/>
    </source>
</evidence>
<evidence type="ECO:0000305" key="3"/>
<feature type="chain" id="PRO_0000168090" description="Lactoylglutathione lyase">
    <location>
        <begin position="1"/>
        <end position="135"/>
    </location>
</feature>
<feature type="domain" description="VOC" evidence="2">
    <location>
        <begin position="2"/>
        <end position="126"/>
    </location>
</feature>
<feature type="active site" description="Proton donor/acceptor" evidence="1">
    <location>
        <position position="122"/>
    </location>
</feature>
<feature type="binding site" evidence="1">
    <location>
        <position position="5"/>
    </location>
    <ligand>
        <name>Ni(2+)</name>
        <dbReference type="ChEBI" id="CHEBI:49786"/>
        <note>ligand shared between dimeric partners</note>
    </ligand>
</feature>
<feature type="binding site" evidence="1">
    <location>
        <position position="9"/>
    </location>
    <ligand>
        <name>substrate</name>
        <note>ligand shared between dimeric partners</note>
    </ligand>
</feature>
<feature type="binding site" evidence="1">
    <location>
        <position position="56"/>
    </location>
    <ligand>
        <name>Ni(2+)</name>
        <dbReference type="ChEBI" id="CHEBI:49786"/>
        <note>ligand shared between dimeric partners</note>
    </ligand>
</feature>
<feature type="binding site" evidence="1">
    <location>
        <position position="60"/>
    </location>
    <ligand>
        <name>substrate</name>
        <note>ligand shared between dimeric partners</note>
    </ligand>
</feature>
<feature type="binding site" description="in other chain" evidence="1">
    <location>
        <position position="74"/>
    </location>
    <ligand>
        <name>Ni(2+)</name>
        <dbReference type="ChEBI" id="CHEBI:49786"/>
        <note>ligand shared between dimeric partners</note>
    </ligand>
</feature>
<feature type="binding site" description="in other chain" evidence="1">
    <location>
        <position position="74"/>
    </location>
    <ligand>
        <name>substrate</name>
        <note>ligand shared between dimeric partners</note>
    </ligand>
</feature>
<feature type="binding site" description="in other chain" evidence="1">
    <location>
        <position position="122"/>
    </location>
    <ligand>
        <name>Ni(2+)</name>
        <dbReference type="ChEBI" id="CHEBI:49786"/>
        <note>ligand shared between dimeric partners</note>
    </ligand>
</feature>
<gene>
    <name type="primary">gloA</name>
    <name type="ordered locus">STY1687</name>
    <name type="ordered locus">t1303</name>
</gene>
<keyword id="KW-0456">Lyase</keyword>
<keyword id="KW-0479">Metal-binding</keyword>
<keyword id="KW-0533">Nickel</keyword>
<proteinExistence type="inferred from homology"/>
<reference key="1">
    <citation type="journal article" date="2001" name="Nature">
        <title>Complete genome sequence of a multiple drug resistant Salmonella enterica serovar Typhi CT18.</title>
        <authorList>
            <person name="Parkhill J."/>
            <person name="Dougan G."/>
            <person name="James K.D."/>
            <person name="Thomson N.R."/>
            <person name="Pickard D."/>
            <person name="Wain J."/>
            <person name="Churcher C.M."/>
            <person name="Mungall K.L."/>
            <person name="Bentley S.D."/>
            <person name="Holden M.T.G."/>
            <person name="Sebaihia M."/>
            <person name="Baker S."/>
            <person name="Basham D."/>
            <person name="Brooks K."/>
            <person name="Chillingworth T."/>
            <person name="Connerton P."/>
            <person name="Cronin A."/>
            <person name="Davis P."/>
            <person name="Davies R.M."/>
            <person name="Dowd L."/>
            <person name="White N."/>
            <person name="Farrar J."/>
            <person name="Feltwell T."/>
            <person name="Hamlin N."/>
            <person name="Haque A."/>
            <person name="Hien T.T."/>
            <person name="Holroyd S."/>
            <person name="Jagels K."/>
            <person name="Krogh A."/>
            <person name="Larsen T.S."/>
            <person name="Leather S."/>
            <person name="Moule S."/>
            <person name="O'Gaora P."/>
            <person name="Parry C."/>
            <person name="Quail M.A."/>
            <person name="Rutherford K.M."/>
            <person name="Simmonds M."/>
            <person name="Skelton J."/>
            <person name="Stevens K."/>
            <person name="Whitehead S."/>
            <person name="Barrell B.G."/>
        </authorList>
    </citation>
    <scope>NUCLEOTIDE SEQUENCE [LARGE SCALE GENOMIC DNA]</scope>
    <source>
        <strain>CT18</strain>
    </source>
</reference>
<reference key="2">
    <citation type="journal article" date="2003" name="J. Bacteriol.">
        <title>Comparative genomics of Salmonella enterica serovar Typhi strains Ty2 and CT18.</title>
        <authorList>
            <person name="Deng W."/>
            <person name="Liou S.-R."/>
            <person name="Plunkett G. III"/>
            <person name="Mayhew G.F."/>
            <person name="Rose D.J."/>
            <person name="Burland V."/>
            <person name="Kodoyianni V."/>
            <person name="Schwartz D.C."/>
            <person name="Blattner F.R."/>
        </authorList>
    </citation>
    <scope>NUCLEOTIDE SEQUENCE [LARGE SCALE GENOMIC DNA]</scope>
    <source>
        <strain>ATCC 700931 / Ty2</strain>
    </source>
</reference>
<name>LGUL_SALTI</name>
<dbReference type="EC" id="4.4.1.5"/>
<dbReference type="EMBL" id="AL513382">
    <property type="protein sequence ID" value="CAD01932.1"/>
    <property type="molecule type" value="Genomic_DNA"/>
</dbReference>
<dbReference type="EMBL" id="AE014613">
    <property type="protein sequence ID" value="AAO68953.1"/>
    <property type="molecule type" value="Genomic_DNA"/>
</dbReference>
<dbReference type="RefSeq" id="NP_456095.1">
    <property type="nucleotide sequence ID" value="NC_003198.1"/>
</dbReference>
<dbReference type="RefSeq" id="WP_001237787.1">
    <property type="nucleotide sequence ID" value="NZ_WSUR01000011.1"/>
</dbReference>
<dbReference type="SMR" id="P0A1Q3"/>
<dbReference type="STRING" id="220341.gene:17585622"/>
<dbReference type="KEGG" id="stt:t1303"/>
<dbReference type="KEGG" id="sty:STY1687"/>
<dbReference type="PATRIC" id="fig|220341.7.peg.1697"/>
<dbReference type="eggNOG" id="COG0346">
    <property type="taxonomic scope" value="Bacteria"/>
</dbReference>
<dbReference type="HOGENOM" id="CLU_046006_8_1_6"/>
<dbReference type="OMA" id="THNWDTP"/>
<dbReference type="OrthoDB" id="9789841at2"/>
<dbReference type="UniPathway" id="UPA00619">
    <property type="reaction ID" value="UER00675"/>
</dbReference>
<dbReference type="Proteomes" id="UP000000541">
    <property type="component" value="Chromosome"/>
</dbReference>
<dbReference type="Proteomes" id="UP000002670">
    <property type="component" value="Chromosome"/>
</dbReference>
<dbReference type="GO" id="GO:0005737">
    <property type="term" value="C:cytoplasm"/>
    <property type="evidence" value="ECO:0007669"/>
    <property type="project" value="TreeGrafter"/>
</dbReference>
<dbReference type="GO" id="GO:0004462">
    <property type="term" value="F:lactoylglutathione lyase activity"/>
    <property type="evidence" value="ECO:0007669"/>
    <property type="project" value="UniProtKB-EC"/>
</dbReference>
<dbReference type="GO" id="GO:0046872">
    <property type="term" value="F:metal ion binding"/>
    <property type="evidence" value="ECO:0007669"/>
    <property type="project" value="UniProtKB-KW"/>
</dbReference>
<dbReference type="GO" id="GO:0019243">
    <property type="term" value="P:methylglyoxal catabolic process to D-lactate via S-lactoyl-glutathione"/>
    <property type="evidence" value="ECO:0007669"/>
    <property type="project" value="TreeGrafter"/>
</dbReference>
<dbReference type="CDD" id="cd16358">
    <property type="entry name" value="GlxI_Ni"/>
    <property type="match status" value="1"/>
</dbReference>
<dbReference type="FunFam" id="3.10.180.10:FF:000002">
    <property type="entry name" value="Lactoylglutathione lyase"/>
    <property type="match status" value="1"/>
</dbReference>
<dbReference type="Gene3D" id="3.10.180.10">
    <property type="entry name" value="2,3-Dihydroxybiphenyl 1,2-Dioxygenase, domain 1"/>
    <property type="match status" value="1"/>
</dbReference>
<dbReference type="InterPro" id="IPR029068">
    <property type="entry name" value="Glyas_Bleomycin-R_OHBP_Dase"/>
</dbReference>
<dbReference type="InterPro" id="IPR004360">
    <property type="entry name" value="Glyas_Fos-R_dOase_dom"/>
</dbReference>
<dbReference type="InterPro" id="IPR004361">
    <property type="entry name" value="Glyoxalase_1"/>
</dbReference>
<dbReference type="InterPro" id="IPR018146">
    <property type="entry name" value="Glyoxalase_1_CS"/>
</dbReference>
<dbReference type="InterPro" id="IPR037523">
    <property type="entry name" value="VOC"/>
</dbReference>
<dbReference type="NCBIfam" id="TIGR00068">
    <property type="entry name" value="glyox_I"/>
    <property type="match status" value="1"/>
</dbReference>
<dbReference type="NCBIfam" id="NF007629">
    <property type="entry name" value="PRK10291.1"/>
    <property type="match status" value="1"/>
</dbReference>
<dbReference type="PANTHER" id="PTHR46036">
    <property type="entry name" value="LACTOYLGLUTATHIONE LYASE"/>
    <property type="match status" value="1"/>
</dbReference>
<dbReference type="PANTHER" id="PTHR46036:SF5">
    <property type="entry name" value="LACTOYLGLUTATHIONE LYASE"/>
    <property type="match status" value="1"/>
</dbReference>
<dbReference type="Pfam" id="PF00903">
    <property type="entry name" value="Glyoxalase"/>
    <property type="match status" value="1"/>
</dbReference>
<dbReference type="SUPFAM" id="SSF54593">
    <property type="entry name" value="Glyoxalase/Bleomycin resistance protein/Dihydroxybiphenyl dioxygenase"/>
    <property type="match status" value="1"/>
</dbReference>
<dbReference type="PROSITE" id="PS00934">
    <property type="entry name" value="GLYOXALASE_I_1"/>
    <property type="match status" value="1"/>
</dbReference>
<dbReference type="PROSITE" id="PS00935">
    <property type="entry name" value="GLYOXALASE_I_2"/>
    <property type="match status" value="1"/>
</dbReference>
<dbReference type="PROSITE" id="PS51819">
    <property type="entry name" value="VOC"/>
    <property type="match status" value="1"/>
</dbReference>
<accession>P0A1Q3</accession>
<accession>Q60003</accession>
<comment type="function">
    <text evidence="1">Catalyzes the conversion of hemimercaptal, formed from methylglyoxal and glutathione, to S-lactoylglutathione.</text>
</comment>
<comment type="catalytic activity">
    <reaction>
        <text>(R)-S-lactoylglutathione = methylglyoxal + glutathione</text>
        <dbReference type="Rhea" id="RHEA:19069"/>
        <dbReference type="ChEBI" id="CHEBI:17158"/>
        <dbReference type="ChEBI" id="CHEBI:57474"/>
        <dbReference type="ChEBI" id="CHEBI:57925"/>
        <dbReference type="EC" id="4.4.1.5"/>
    </reaction>
</comment>
<comment type="cofactor">
    <cofactor evidence="1">
        <name>Ni(2+)</name>
        <dbReference type="ChEBI" id="CHEBI:49786"/>
    </cofactor>
    <text evidence="1">Binds 1 nickel ion per subunit. In the homodimer, two nickel ions are bound between subunits.</text>
</comment>
<comment type="pathway">
    <text>Secondary metabolite metabolism; methylglyoxal degradation; (R)-lactate from methylglyoxal: step 1/2.</text>
</comment>
<comment type="subunit">
    <text evidence="1">Homodimer.</text>
</comment>
<comment type="similarity">
    <text evidence="3">Belongs to the glyoxalase I family.</text>
</comment>
<organism>
    <name type="scientific">Salmonella typhi</name>
    <dbReference type="NCBI Taxonomy" id="90370"/>
    <lineage>
        <taxon>Bacteria</taxon>
        <taxon>Pseudomonadati</taxon>
        <taxon>Pseudomonadota</taxon>
        <taxon>Gammaproteobacteria</taxon>
        <taxon>Enterobacterales</taxon>
        <taxon>Enterobacteriaceae</taxon>
        <taxon>Salmonella</taxon>
    </lineage>
</organism>